<protein>
    <recommendedName>
        <fullName evidence="1">Small ribosomal subunit protein uS14B</fullName>
    </recommendedName>
    <alternativeName>
        <fullName evidence="2">30S ribosomal protein S14 type Z</fullName>
    </alternativeName>
</protein>
<evidence type="ECO:0000255" key="1">
    <source>
        <dbReference type="HAMAP-Rule" id="MF_01364"/>
    </source>
</evidence>
<evidence type="ECO:0000305" key="2"/>
<feature type="chain" id="PRO_0000269113" description="Small ribosomal subunit protein uS14B">
    <location>
        <begin position="1"/>
        <end position="61"/>
    </location>
</feature>
<feature type="binding site" evidence="1">
    <location>
        <position position="24"/>
    </location>
    <ligand>
        <name>Zn(2+)</name>
        <dbReference type="ChEBI" id="CHEBI:29105"/>
    </ligand>
</feature>
<feature type="binding site" evidence="1">
    <location>
        <position position="27"/>
    </location>
    <ligand>
        <name>Zn(2+)</name>
        <dbReference type="ChEBI" id="CHEBI:29105"/>
    </ligand>
</feature>
<feature type="binding site" evidence="1">
    <location>
        <position position="40"/>
    </location>
    <ligand>
        <name>Zn(2+)</name>
        <dbReference type="ChEBI" id="CHEBI:29105"/>
    </ligand>
</feature>
<feature type="binding site" evidence="1">
    <location>
        <position position="43"/>
    </location>
    <ligand>
        <name>Zn(2+)</name>
        <dbReference type="ChEBI" id="CHEBI:29105"/>
    </ligand>
</feature>
<reference key="1">
    <citation type="journal article" date="2004" name="Nucleic Acids Res.">
        <title>Whole genome comparisons of serotype 4b and 1/2a strains of the food-borne pathogen Listeria monocytogenes reveal new insights into the core genome components of this species.</title>
        <authorList>
            <person name="Nelson K.E."/>
            <person name="Fouts D.E."/>
            <person name="Mongodin E.F."/>
            <person name="Ravel J."/>
            <person name="DeBoy R.T."/>
            <person name="Kolonay J.F."/>
            <person name="Rasko D.A."/>
            <person name="Angiuoli S.V."/>
            <person name="Gill S.R."/>
            <person name="Paulsen I.T."/>
            <person name="Peterson J.D."/>
            <person name="White O."/>
            <person name="Nelson W.C."/>
            <person name="Nierman W.C."/>
            <person name="Beanan M.J."/>
            <person name="Brinkac L.M."/>
            <person name="Daugherty S.C."/>
            <person name="Dodson R.J."/>
            <person name="Durkin A.S."/>
            <person name="Madupu R."/>
            <person name="Haft D.H."/>
            <person name="Selengut J."/>
            <person name="Van Aken S.E."/>
            <person name="Khouri H.M."/>
            <person name="Fedorova N."/>
            <person name="Forberger H.A."/>
            <person name="Tran B."/>
            <person name="Kathariou S."/>
            <person name="Wonderling L.D."/>
            <person name="Uhlich G.A."/>
            <person name="Bayles D.O."/>
            <person name="Luchansky J.B."/>
            <person name="Fraser C.M."/>
        </authorList>
    </citation>
    <scope>NUCLEOTIDE SEQUENCE [LARGE SCALE GENOMIC DNA]</scope>
    <source>
        <strain>F2365</strain>
    </source>
</reference>
<accession>Q71WF9</accession>
<sequence length="61" mass="7147">MAKKSMIAKQKRTPKYAVQAYTRCERCGRPHSVIRKFKLCRICFRELAYKGQIPGVKKASW</sequence>
<dbReference type="EMBL" id="AE017262">
    <property type="protein sequence ID" value="AAT05357.1"/>
    <property type="molecule type" value="Genomic_DNA"/>
</dbReference>
<dbReference type="RefSeq" id="WP_003723684.1">
    <property type="nucleotide sequence ID" value="NC_002973.6"/>
</dbReference>
<dbReference type="SMR" id="Q71WF9"/>
<dbReference type="KEGG" id="lmf:LMOf2365_2592"/>
<dbReference type="HOGENOM" id="CLU_139869_3_0_9"/>
<dbReference type="GO" id="GO:0015935">
    <property type="term" value="C:small ribosomal subunit"/>
    <property type="evidence" value="ECO:0007669"/>
    <property type="project" value="TreeGrafter"/>
</dbReference>
<dbReference type="GO" id="GO:0019843">
    <property type="term" value="F:rRNA binding"/>
    <property type="evidence" value="ECO:0007669"/>
    <property type="project" value="UniProtKB-UniRule"/>
</dbReference>
<dbReference type="GO" id="GO:0003735">
    <property type="term" value="F:structural constituent of ribosome"/>
    <property type="evidence" value="ECO:0007669"/>
    <property type="project" value="InterPro"/>
</dbReference>
<dbReference type="GO" id="GO:0008270">
    <property type="term" value="F:zinc ion binding"/>
    <property type="evidence" value="ECO:0007669"/>
    <property type="project" value="UniProtKB-UniRule"/>
</dbReference>
<dbReference type="GO" id="GO:0006412">
    <property type="term" value="P:translation"/>
    <property type="evidence" value="ECO:0007669"/>
    <property type="project" value="UniProtKB-UniRule"/>
</dbReference>
<dbReference type="FunFam" id="4.10.830.10:FF:000001">
    <property type="entry name" value="30S ribosomal protein S14 type Z"/>
    <property type="match status" value="1"/>
</dbReference>
<dbReference type="Gene3D" id="4.10.830.10">
    <property type="entry name" value="30s Ribosomal Protein S14, Chain N"/>
    <property type="match status" value="1"/>
</dbReference>
<dbReference type="HAMAP" id="MF_01364_B">
    <property type="entry name" value="Ribosomal_uS14_2_B"/>
    <property type="match status" value="1"/>
</dbReference>
<dbReference type="InterPro" id="IPR001209">
    <property type="entry name" value="Ribosomal_uS14"/>
</dbReference>
<dbReference type="InterPro" id="IPR023053">
    <property type="entry name" value="Ribosomal_uS14_bact"/>
</dbReference>
<dbReference type="InterPro" id="IPR018271">
    <property type="entry name" value="Ribosomal_uS14_CS"/>
</dbReference>
<dbReference type="InterPro" id="IPR043140">
    <property type="entry name" value="Ribosomal_uS14_sf"/>
</dbReference>
<dbReference type="NCBIfam" id="NF005974">
    <property type="entry name" value="PRK08061.1"/>
    <property type="match status" value="1"/>
</dbReference>
<dbReference type="PANTHER" id="PTHR19836">
    <property type="entry name" value="30S RIBOSOMAL PROTEIN S14"/>
    <property type="match status" value="1"/>
</dbReference>
<dbReference type="PANTHER" id="PTHR19836:SF26">
    <property type="entry name" value="SMALL RIBOSOMAL SUBUNIT PROTEIN US14B"/>
    <property type="match status" value="1"/>
</dbReference>
<dbReference type="Pfam" id="PF00253">
    <property type="entry name" value="Ribosomal_S14"/>
    <property type="match status" value="1"/>
</dbReference>
<dbReference type="SUPFAM" id="SSF57716">
    <property type="entry name" value="Glucocorticoid receptor-like (DNA-binding domain)"/>
    <property type="match status" value="1"/>
</dbReference>
<dbReference type="PROSITE" id="PS00527">
    <property type="entry name" value="RIBOSOMAL_S14"/>
    <property type="match status" value="1"/>
</dbReference>
<proteinExistence type="inferred from homology"/>
<comment type="function">
    <text evidence="1">Binds 16S rRNA, required for the assembly of 30S particles and may also be responsible for determining the conformation of the 16S rRNA at the A site.</text>
</comment>
<comment type="cofactor">
    <cofactor evidence="1">
        <name>Zn(2+)</name>
        <dbReference type="ChEBI" id="CHEBI:29105"/>
    </cofactor>
    <text evidence="1">Binds 1 zinc ion per subunit.</text>
</comment>
<comment type="subunit">
    <text evidence="1">Part of the 30S ribosomal subunit. Contacts proteins S3 and S10.</text>
</comment>
<comment type="similarity">
    <text evidence="1">Belongs to the universal ribosomal protein uS14 family. Zinc-binding uS14 subfamily.</text>
</comment>
<name>RS14Z_LISMF</name>
<keyword id="KW-0479">Metal-binding</keyword>
<keyword id="KW-0687">Ribonucleoprotein</keyword>
<keyword id="KW-0689">Ribosomal protein</keyword>
<keyword id="KW-0694">RNA-binding</keyword>
<keyword id="KW-0699">rRNA-binding</keyword>
<keyword id="KW-0862">Zinc</keyword>
<gene>
    <name evidence="1" type="primary">rpsZ</name>
    <name evidence="1" type="synonym">rpsN-2</name>
    <name evidence="1" type="synonym">rpsN1</name>
    <name type="ordered locus">LMOf2365_2592</name>
</gene>
<organism>
    <name type="scientific">Listeria monocytogenes serotype 4b (strain F2365)</name>
    <dbReference type="NCBI Taxonomy" id="265669"/>
    <lineage>
        <taxon>Bacteria</taxon>
        <taxon>Bacillati</taxon>
        <taxon>Bacillota</taxon>
        <taxon>Bacilli</taxon>
        <taxon>Bacillales</taxon>
        <taxon>Listeriaceae</taxon>
        <taxon>Listeria</taxon>
    </lineage>
</organism>